<protein>
    <recommendedName>
        <fullName>Defensin-like protein 292</fullName>
    </recommendedName>
</protein>
<accession>P0CAY8</accession>
<dbReference type="EMBL" id="AC007167">
    <property type="status" value="NOT_ANNOTATED_CDS"/>
    <property type="molecule type" value="Genomic_DNA"/>
</dbReference>
<dbReference type="EMBL" id="AC007178">
    <property type="status" value="NOT_ANNOTATED_CDS"/>
    <property type="molecule type" value="Genomic_DNA"/>
</dbReference>
<dbReference type="EMBL" id="CP002685">
    <property type="status" value="NOT_ANNOTATED_CDS"/>
    <property type="molecule type" value="Genomic_DNA"/>
</dbReference>
<dbReference type="EMBL" id="EF182803">
    <property type="status" value="NOT_ANNOTATED_CDS"/>
    <property type="molecule type" value="mRNA"/>
</dbReference>
<dbReference type="Araport" id="AT2G04033"/>
<dbReference type="TAIR" id="AT2G04033"/>
<dbReference type="InParanoid" id="P0CAY8"/>
<dbReference type="OrthoDB" id="1020638at2759"/>
<dbReference type="Proteomes" id="UP000006548">
    <property type="component" value="Chromosome 2"/>
</dbReference>
<dbReference type="ExpressionAtlas" id="P0CAY8">
    <property type="expression patterns" value="baseline and differential"/>
</dbReference>
<dbReference type="GO" id="GO:0050832">
    <property type="term" value="P:defense response to fungus"/>
    <property type="evidence" value="ECO:0007669"/>
    <property type="project" value="UniProtKB-KW"/>
</dbReference>
<dbReference type="GO" id="GO:0031640">
    <property type="term" value="P:killing of cells of another organism"/>
    <property type="evidence" value="ECO:0007669"/>
    <property type="project" value="UniProtKB-KW"/>
</dbReference>
<keyword id="KW-0929">Antimicrobial</keyword>
<keyword id="KW-1015">Disulfide bond</keyword>
<keyword id="KW-0295">Fungicide</keyword>
<keyword id="KW-0611">Plant defense</keyword>
<keyword id="KW-1185">Reference proteome</keyword>
<sequence>MLLETDASRNKPSSYIPLCGSDNSCGGLWCPRKGGKYSCISMTCDIQEDCPKLVRCKDSPGPYCMEGFCTC</sequence>
<feature type="chain" id="PRO_0000379752" description="Defensin-like protein 292">
    <location>
        <begin position="1"/>
        <end position="71"/>
    </location>
</feature>
<feature type="disulfide bond" evidence="1">
    <location>
        <begin position="44"/>
        <end position="64"/>
    </location>
</feature>
<feature type="disulfide bond" evidence="1">
    <location>
        <begin position="50"/>
        <end position="69"/>
    </location>
</feature>
<feature type="disulfide bond" evidence="1">
    <location>
        <begin position="56"/>
        <end position="71"/>
    </location>
</feature>
<feature type="sequence conflict" description="In Ref. 3; EF182803." evidence="2" ref="3">
    <original>D</original>
    <variation>N</variation>
    <location>
        <position position="58"/>
    </location>
</feature>
<gene>
    <name type="ordered locus">At2g04033</name>
    <name type="ORF">F3C11</name>
    <name type="ORF">F3L12</name>
</gene>
<reference key="1">
    <citation type="journal article" date="1999" name="Nature">
        <title>Sequence and analysis of chromosome 2 of the plant Arabidopsis thaliana.</title>
        <authorList>
            <person name="Lin X."/>
            <person name="Kaul S."/>
            <person name="Rounsley S.D."/>
            <person name="Shea T.P."/>
            <person name="Benito M.-I."/>
            <person name="Town C.D."/>
            <person name="Fujii C.Y."/>
            <person name="Mason T.M."/>
            <person name="Bowman C.L."/>
            <person name="Barnstead M.E."/>
            <person name="Feldblyum T.V."/>
            <person name="Buell C.R."/>
            <person name="Ketchum K.A."/>
            <person name="Lee J.J."/>
            <person name="Ronning C.M."/>
            <person name="Koo H.L."/>
            <person name="Moffat K.S."/>
            <person name="Cronin L.A."/>
            <person name="Shen M."/>
            <person name="Pai G."/>
            <person name="Van Aken S."/>
            <person name="Umayam L."/>
            <person name="Tallon L.J."/>
            <person name="Gill J.E."/>
            <person name="Adams M.D."/>
            <person name="Carrera A.J."/>
            <person name="Creasy T.H."/>
            <person name="Goodman H.M."/>
            <person name="Somerville C.R."/>
            <person name="Copenhaver G.P."/>
            <person name="Preuss D."/>
            <person name="Nierman W.C."/>
            <person name="White O."/>
            <person name="Eisen J.A."/>
            <person name="Salzberg S.L."/>
            <person name="Fraser C.M."/>
            <person name="Venter J.C."/>
        </authorList>
    </citation>
    <scope>NUCLEOTIDE SEQUENCE [LARGE SCALE GENOMIC DNA]</scope>
    <source>
        <strain>cv. Columbia</strain>
    </source>
</reference>
<reference key="2">
    <citation type="journal article" date="2017" name="Plant J.">
        <title>Araport11: a complete reannotation of the Arabidopsis thaliana reference genome.</title>
        <authorList>
            <person name="Cheng C.Y."/>
            <person name="Krishnakumar V."/>
            <person name="Chan A.P."/>
            <person name="Thibaud-Nissen F."/>
            <person name="Schobel S."/>
            <person name="Town C.D."/>
        </authorList>
    </citation>
    <scope>GENOME REANNOTATION</scope>
    <source>
        <strain>cv. Columbia</strain>
    </source>
</reference>
<reference key="3">
    <citation type="journal article" date="2007" name="Plant J.">
        <title>Small cysteine-rich peptides resembling antimicrobial peptides have been under-predicted in plants.</title>
        <authorList>
            <person name="Silverstein K.A.T."/>
            <person name="Moskal W.A. Jr."/>
            <person name="Wu H.C."/>
            <person name="Underwood B.A."/>
            <person name="Graham M.A."/>
            <person name="Town C.D."/>
            <person name="VandenBosch K.A."/>
        </authorList>
    </citation>
    <scope>NUCLEOTIDE SEQUENCE [LARGE SCALE MRNA]</scope>
    <source>
        <strain>cv. Columbia</strain>
    </source>
</reference>
<reference key="4">
    <citation type="journal article" date="2005" name="Plant Physiol.">
        <title>Genome organization of more than 300 defensin-like genes in Arabidopsis.</title>
        <authorList>
            <person name="Silverstein K.A.T."/>
            <person name="Graham M.A."/>
            <person name="Paape T.D."/>
            <person name="VandenBosch K.A."/>
        </authorList>
    </citation>
    <scope>GENE FAMILY</scope>
</reference>
<comment type="similarity">
    <text evidence="2">Belongs to the DEFL family.</text>
</comment>
<comment type="caution">
    <text evidence="2">Could be the product of a pseudogene. Lacks the signal peptide and 1 of the 4 disulfide bonds, which are conserved features of the family.</text>
</comment>
<organism>
    <name type="scientific">Arabidopsis thaliana</name>
    <name type="common">Mouse-ear cress</name>
    <dbReference type="NCBI Taxonomy" id="3702"/>
    <lineage>
        <taxon>Eukaryota</taxon>
        <taxon>Viridiplantae</taxon>
        <taxon>Streptophyta</taxon>
        <taxon>Embryophyta</taxon>
        <taxon>Tracheophyta</taxon>
        <taxon>Spermatophyta</taxon>
        <taxon>Magnoliopsida</taxon>
        <taxon>eudicotyledons</taxon>
        <taxon>Gunneridae</taxon>
        <taxon>Pentapetalae</taxon>
        <taxon>rosids</taxon>
        <taxon>malvids</taxon>
        <taxon>Brassicales</taxon>
        <taxon>Brassicaceae</taxon>
        <taxon>Camelineae</taxon>
        <taxon>Arabidopsis</taxon>
    </lineage>
</organism>
<name>DF292_ARATH</name>
<proteinExistence type="uncertain"/>
<evidence type="ECO:0000250" key="1"/>
<evidence type="ECO:0000305" key="2"/>